<name>OPGB_CITK8</name>
<gene>
    <name evidence="1" type="primary">mdoB</name>
    <name evidence="1" type="synonym">opgB</name>
    <name type="ordered locus">CKO_03440</name>
</gene>
<feature type="chain" id="PRO_1000064571" description="Phosphoglycerol transferase I">
    <location>
        <begin position="1"/>
        <end position="763"/>
    </location>
</feature>
<feature type="transmembrane region" description="Helical" evidence="1">
    <location>
        <begin position="1"/>
        <end position="21"/>
    </location>
</feature>
<feature type="transmembrane region" description="Helical" evidence="1">
    <location>
        <begin position="26"/>
        <end position="46"/>
    </location>
</feature>
<feature type="transmembrane region" description="Helical" evidence="1">
    <location>
        <begin position="77"/>
        <end position="97"/>
    </location>
</feature>
<feature type="transmembrane region" description="Helical" evidence="1">
    <location>
        <begin position="108"/>
        <end position="128"/>
    </location>
</feature>
<comment type="function">
    <text evidence="1">Transfers a phosphoglycerol residue from phosphatidylglycerol to the membrane-bound nascent glucan backbones.</text>
</comment>
<comment type="catalytic activity">
    <reaction evidence="1">
        <text>a phosphatidylglycerol + a membrane-derived-oligosaccharide D-glucose = a 1,2-diacyl-sn-glycerol + a membrane-derived-oligosaccharide 6-(glycerophospho)-D-glucose.</text>
        <dbReference type="EC" id="2.7.8.20"/>
    </reaction>
</comment>
<comment type="pathway">
    <text evidence="1">Glycan metabolism; osmoregulated periplasmic glucan (OPG) biosynthesis.</text>
</comment>
<comment type="subcellular location">
    <subcellularLocation>
        <location evidence="1">Cell inner membrane</location>
        <topology evidence="1">Multi-pass membrane protein</topology>
    </subcellularLocation>
</comment>
<comment type="similarity">
    <text evidence="1">Belongs to the OpgB family.</text>
</comment>
<keyword id="KW-0997">Cell inner membrane</keyword>
<keyword id="KW-1003">Cell membrane</keyword>
<keyword id="KW-0472">Membrane</keyword>
<keyword id="KW-1185">Reference proteome</keyword>
<keyword id="KW-0808">Transferase</keyword>
<keyword id="KW-0812">Transmembrane</keyword>
<keyword id="KW-1133">Transmembrane helix</keyword>
<proteinExistence type="inferred from homology"/>
<organism>
    <name type="scientific">Citrobacter koseri (strain ATCC BAA-895 / CDC 4225-83 / SGSC4696)</name>
    <dbReference type="NCBI Taxonomy" id="290338"/>
    <lineage>
        <taxon>Bacteria</taxon>
        <taxon>Pseudomonadati</taxon>
        <taxon>Pseudomonadota</taxon>
        <taxon>Gammaproteobacteria</taxon>
        <taxon>Enterobacterales</taxon>
        <taxon>Enterobacteriaceae</taxon>
        <taxon>Citrobacter</taxon>
    </lineage>
</organism>
<reference key="1">
    <citation type="submission" date="2007-08" db="EMBL/GenBank/DDBJ databases">
        <authorList>
            <consortium name="The Citrobacter koseri Genome Sequencing Project"/>
            <person name="McClelland M."/>
            <person name="Sanderson E.K."/>
            <person name="Porwollik S."/>
            <person name="Spieth J."/>
            <person name="Clifton W.S."/>
            <person name="Latreille P."/>
            <person name="Courtney L."/>
            <person name="Wang C."/>
            <person name="Pepin K."/>
            <person name="Bhonagiri V."/>
            <person name="Nash W."/>
            <person name="Johnson M."/>
            <person name="Thiruvilangam P."/>
            <person name="Wilson R."/>
        </authorList>
    </citation>
    <scope>NUCLEOTIDE SEQUENCE [LARGE SCALE GENOMIC DNA]</scope>
    <source>
        <strain>ATCC BAA-895 / CDC 4225-83 / SGSC4696</strain>
    </source>
</reference>
<dbReference type="EC" id="2.7.8.20" evidence="1"/>
<dbReference type="EMBL" id="CP000822">
    <property type="protein sequence ID" value="ABV14520.1"/>
    <property type="molecule type" value="Genomic_DNA"/>
</dbReference>
<dbReference type="RefSeq" id="WP_012134221.1">
    <property type="nucleotide sequence ID" value="NC_009792.1"/>
</dbReference>
<dbReference type="SMR" id="A8AM07"/>
<dbReference type="STRING" id="290338.CKO_03440"/>
<dbReference type="GeneID" id="45137192"/>
<dbReference type="KEGG" id="cko:CKO_03440"/>
<dbReference type="HOGENOM" id="CLU_023986_1_0_6"/>
<dbReference type="OrthoDB" id="9760224at2"/>
<dbReference type="UniPathway" id="UPA00637"/>
<dbReference type="Proteomes" id="UP000008148">
    <property type="component" value="Chromosome"/>
</dbReference>
<dbReference type="GO" id="GO:0005886">
    <property type="term" value="C:plasma membrane"/>
    <property type="evidence" value="ECO:0007669"/>
    <property type="project" value="UniProtKB-SubCell"/>
</dbReference>
<dbReference type="GO" id="GO:0008960">
    <property type="term" value="F:phosphatidylglycerol-membrane-oligosaccharide glycerophosphotransferase activity"/>
    <property type="evidence" value="ECO:0007669"/>
    <property type="project" value="UniProtKB-UniRule"/>
</dbReference>
<dbReference type="GO" id="GO:0009250">
    <property type="term" value="P:glucan biosynthetic process"/>
    <property type="evidence" value="ECO:0007669"/>
    <property type="project" value="UniProtKB-UniRule"/>
</dbReference>
<dbReference type="CDD" id="cd16015">
    <property type="entry name" value="LTA_synthase"/>
    <property type="match status" value="1"/>
</dbReference>
<dbReference type="FunFam" id="3.40.720.10:FF:000009">
    <property type="entry name" value="Phosphoglycerol transferase I"/>
    <property type="match status" value="1"/>
</dbReference>
<dbReference type="Gene3D" id="3.40.720.10">
    <property type="entry name" value="Alkaline Phosphatase, subunit A"/>
    <property type="match status" value="1"/>
</dbReference>
<dbReference type="HAMAP" id="MF_01070">
    <property type="entry name" value="MdoB_OpgB"/>
    <property type="match status" value="1"/>
</dbReference>
<dbReference type="InterPro" id="IPR017850">
    <property type="entry name" value="Alkaline_phosphatase_core_sf"/>
</dbReference>
<dbReference type="InterPro" id="IPR054288">
    <property type="entry name" value="DUF7024"/>
</dbReference>
<dbReference type="InterPro" id="IPR020881">
    <property type="entry name" value="OpgB"/>
</dbReference>
<dbReference type="InterPro" id="IPR050448">
    <property type="entry name" value="OpgB/LTA_synthase_biosynth"/>
</dbReference>
<dbReference type="InterPro" id="IPR000917">
    <property type="entry name" value="Sulfatase_N"/>
</dbReference>
<dbReference type="NCBIfam" id="NF003000">
    <property type="entry name" value="PRK03776.1"/>
    <property type="match status" value="1"/>
</dbReference>
<dbReference type="PANTHER" id="PTHR47371">
    <property type="entry name" value="LIPOTEICHOIC ACID SYNTHASE"/>
    <property type="match status" value="1"/>
</dbReference>
<dbReference type="PANTHER" id="PTHR47371:SF3">
    <property type="entry name" value="PHOSPHOGLYCEROL TRANSFERASE I"/>
    <property type="match status" value="1"/>
</dbReference>
<dbReference type="Pfam" id="PF22895">
    <property type="entry name" value="DUF7024"/>
    <property type="match status" value="1"/>
</dbReference>
<dbReference type="Pfam" id="PF00884">
    <property type="entry name" value="Sulfatase"/>
    <property type="match status" value="1"/>
</dbReference>
<dbReference type="SUPFAM" id="SSF53649">
    <property type="entry name" value="Alkaline phosphatase-like"/>
    <property type="match status" value="1"/>
</dbReference>
<sequence length="763" mass="85151">MSELLSIALFLASVLIYAWKAGRNTWWFAAILAVLGLFVVLNITLYASDYFTGDGINDAVLYTLTNSLTGAGVSKYILPGAGIVLALAAVFSALGWVLRRRRHHPHHFGYSLLALLLALGSVDASPAFRQISELVKSQSRDGDPDFPAYYKEPSKTIPNPQLNLVYIYGESLERTYFDNDAFPDLTPELGALKNEGLDFSHTMQLPGTDYTIAGMVASQCGIPLFAPFEGNASASVSSFFPQNICLGDILKNSGYQNYFVQGANLRFAGKDVFLKSHGFDHLYGAEELKTVVADPSYRNDWGFYDDTVLDEAWKKFEELSRSGQRFSLFTLTVDTHHPDGFISRTCNRKRYDFDGKPNQSFSAVSCSQENIAEFINKIKASPWFKNTVIVVSSDHLAMNNTAWKYLNKQDRNNLFFVLRGDQPQQDTLAVKRNTMDNGATVLDILGGDNFIGLGRSSLSGQSLSEVFLNSKEKILAMKPDIIRLWNFPKEMKDFTVDRDKDMIAFSGSHFRLPLLLRVSDKRVEPLPESEYSAPLRFQLANFAPRDNFVWVDRCYKMAQLWAPELALSTDWCVSQGQLGGQQSIQHVDKAQWKGKTAFKDTVIDMERYKGNVDTLKIVDNDIRYKADSFIFNVAGAPEEVKQFSGISRPESWGRWSNAQLGDEVKIEYNTPLPKKFDLVITAKAFGANANRPIPVRVGKEEQTLVLENEVTTTTLHFDNPSNASTLVIVPPDPVSTNEGNILGHSPRKLGIGMVEIKVVNAEG</sequence>
<accession>A8AM07</accession>
<evidence type="ECO:0000255" key="1">
    <source>
        <dbReference type="HAMAP-Rule" id="MF_01070"/>
    </source>
</evidence>
<protein>
    <recommendedName>
        <fullName evidence="1">Phosphoglycerol transferase I</fullName>
        <ecNumber evidence="1">2.7.8.20</ecNumber>
    </recommendedName>
    <alternativeName>
        <fullName evidence="1">Phosphatidylglycerol--membrane-oligosaccharide glycerophosphotransferase</fullName>
    </alternativeName>
</protein>